<gene>
    <name evidence="1" type="primary">mutL</name>
    <name type="ordered locus">MS1516</name>
</gene>
<dbReference type="EMBL" id="AE016827">
    <property type="protein sequence ID" value="AAU38123.1"/>
    <property type="molecule type" value="Genomic_DNA"/>
</dbReference>
<dbReference type="RefSeq" id="WP_011200689.1">
    <property type="nucleotide sequence ID" value="NC_006300.1"/>
</dbReference>
<dbReference type="SMR" id="Q65SD7"/>
<dbReference type="STRING" id="221988.MS1516"/>
<dbReference type="KEGG" id="msu:MS1516"/>
<dbReference type="eggNOG" id="COG0323">
    <property type="taxonomic scope" value="Bacteria"/>
</dbReference>
<dbReference type="HOGENOM" id="CLU_004131_5_1_6"/>
<dbReference type="OrthoDB" id="9763467at2"/>
<dbReference type="Proteomes" id="UP000000607">
    <property type="component" value="Chromosome"/>
</dbReference>
<dbReference type="GO" id="GO:0032300">
    <property type="term" value="C:mismatch repair complex"/>
    <property type="evidence" value="ECO:0007669"/>
    <property type="project" value="InterPro"/>
</dbReference>
<dbReference type="GO" id="GO:0005524">
    <property type="term" value="F:ATP binding"/>
    <property type="evidence" value="ECO:0007669"/>
    <property type="project" value="InterPro"/>
</dbReference>
<dbReference type="GO" id="GO:0016887">
    <property type="term" value="F:ATP hydrolysis activity"/>
    <property type="evidence" value="ECO:0007669"/>
    <property type="project" value="InterPro"/>
</dbReference>
<dbReference type="GO" id="GO:0140664">
    <property type="term" value="F:ATP-dependent DNA damage sensor activity"/>
    <property type="evidence" value="ECO:0007669"/>
    <property type="project" value="InterPro"/>
</dbReference>
<dbReference type="GO" id="GO:0030983">
    <property type="term" value="F:mismatched DNA binding"/>
    <property type="evidence" value="ECO:0007669"/>
    <property type="project" value="InterPro"/>
</dbReference>
<dbReference type="GO" id="GO:0006298">
    <property type="term" value="P:mismatch repair"/>
    <property type="evidence" value="ECO:0007669"/>
    <property type="project" value="UniProtKB-UniRule"/>
</dbReference>
<dbReference type="CDD" id="cd16926">
    <property type="entry name" value="HATPase_MutL-MLH-PMS-like"/>
    <property type="match status" value="1"/>
</dbReference>
<dbReference type="CDD" id="cd03482">
    <property type="entry name" value="MutL_Trans_MutL"/>
    <property type="match status" value="1"/>
</dbReference>
<dbReference type="FunFam" id="3.30.230.10:FF:000013">
    <property type="entry name" value="DNA mismatch repair endonuclease MutL"/>
    <property type="match status" value="1"/>
</dbReference>
<dbReference type="FunFam" id="3.30.565.10:FF:000003">
    <property type="entry name" value="DNA mismatch repair endonuclease MutL"/>
    <property type="match status" value="1"/>
</dbReference>
<dbReference type="Gene3D" id="3.30.230.10">
    <property type="match status" value="1"/>
</dbReference>
<dbReference type="Gene3D" id="3.30.565.10">
    <property type="entry name" value="Histidine kinase-like ATPase, C-terminal domain"/>
    <property type="match status" value="1"/>
</dbReference>
<dbReference type="Gene3D" id="3.30.1540.20">
    <property type="entry name" value="MutL, C-terminal domain, dimerisation subdomain"/>
    <property type="match status" value="1"/>
</dbReference>
<dbReference type="Gene3D" id="3.30.1370.100">
    <property type="entry name" value="MutL, C-terminal domain, regulatory subdomain"/>
    <property type="match status" value="1"/>
</dbReference>
<dbReference type="HAMAP" id="MF_00149">
    <property type="entry name" value="DNA_mis_repair"/>
    <property type="match status" value="1"/>
</dbReference>
<dbReference type="InterPro" id="IPR014762">
    <property type="entry name" value="DNA_mismatch_repair_CS"/>
</dbReference>
<dbReference type="InterPro" id="IPR020667">
    <property type="entry name" value="DNA_mismatch_repair_MutL"/>
</dbReference>
<dbReference type="InterPro" id="IPR013507">
    <property type="entry name" value="DNA_mismatch_S5_2-like"/>
</dbReference>
<dbReference type="InterPro" id="IPR036890">
    <property type="entry name" value="HATPase_C_sf"/>
</dbReference>
<dbReference type="InterPro" id="IPR002099">
    <property type="entry name" value="MutL/Mlh/PMS"/>
</dbReference>
<dbReference type="InterPro" id="IPR038973">
    <property type="entry name" value="MutL/Mlh/Pms-like"/>
</dbReference>
<dbReference type="InterPro" id="IPR014790">
    <property type="entry name" value="MutL_C"/>
</dbReference>
<dbReference type="InterPro" id="IPR042120">
    <property type="entry name" value="MutL_C_dimsub"/>
</dbReference>
<dbReference type="InterPro" id="IPR042121">
    <property type="entry name" value="MutL_C_regsub"/>
</dbReference>
<dbReference type="InterPro" id="IPR037198">
    <property type="entry name" value="MutL_C_sf"/>
</dbReference>
<dbReference type="InterPro" id="IPR020568">
    <property type="entry name" value="Ribosomal_Su5_D2-typ_SF"/>
</dbReference>
<dbReference type="InterPro" id="IPR014721">
    <property type="entry name" value="Ribsml_uS5_D2-typ_fold_subgr"/>
</dbReference>
<dbReference type="NCBIfam" id="TIGR00585">
    <property type="entry name" value="mutl"/>
    <property type="match status" value="1"/>
</dbReference>
<dbReference type="NCBIfam" id="NF000948">
    <property type="entry name" value="PRK00095.1-1"/>
    <property type="match status" value="1"/>
</dbReference>
<dbReference type="PANTHER" id="PTHR10073">
    <property type="entry name" value="DNA MISMATCH REPAIR PROTEIN MLH, PMS, MUTL"/>
    <property type="match status" value="1"/>
</dbReference>
<dbReference type="PANTHER" id="PTHR10073:SF12">
    <property type="entry name" value="DNA MISMATCH REPAIR PROTEIN MLH1"/>
    <property type="match status" value="1"/>
</dbReference>
<dbReference type="Pfam" id="PF01119">
    <property type="entry name" value="DNA_mis_repair"/>
    <property type="match status" value="1"/>
</dbReference>
<dbReference type="Pfam" id="PF13589">
    <property type="entry name" value="HATPase_c_3"/>
    <property type="match status" value="1"/>
</dbReference>
<dbReference type="Pfam" id="PF08676">
    <property type="entry name" value="MutL_C"/>
    <property type="match status" value="1"/>
</dbReference>
<dbReference type="SMART" id="SM01340">
    <property type="entry name" value="DNA_mis_repair"/>
    <property type="match status" value="1"/>
</dbReference>
<dbReference type="SMART" id="SM00853">
    <property type="entry name" value="MutL_C"/>
    <property type="match status" value="1"/>
</dbReference>
<dbReference type="SUPFAM" id="SSF55874">
    <property type="entry name" value="ATPase domain of HSP90 chaperone/DNA topoisomerase II/histidine kinase"/>
    <property type="match status" value="1"/>
</dbReference>
<dbReference type="SUPFAM" id="SSF118116">
    <property type="entry name" value="DNA mismatch repair protein MutL"/>
    <property type="match status" value="1"/>
</dbReference>
<dbReference type="SUPFAM" id="SSF54211">
    <property type="entry name" value="Ribosomal protein S5 domain 2-like"/>
    <property type="match status" value="1"/>
</dbReference>
<dbReference type="PROSITE" id="PS00058">
    <property type="entry name" value="DNA_MISMATCH_REPAIR_1"/>
    <property type="match status" value="1"/>
</dbReference>
<accession>Q65SD7</accession>
<keyword id="KW-0227">DNA damage</keyword>
<keyword id="KW-0234">DNA repair</keyword>
<sequence length="631" mass="70906">MPIHILPPQLANQIAAGEVVERPASVVKELVENSLDAGASRIQIDIENGGATLIRIRDNGLGIAKEDLSLALARHATSKISCLDDLEAILSLGFRGEALASISSVSRLTLTSRTAEQKEAWQVYAQGRDMETTIKPASHPVGTTVEVANLFFNTPARRKFLRTEKTEFAHIDEVVRRIALAKPQIAFTLTHNGKILRQYKSAVEIEQKLKRVSAICGEDFVQNALQIDWKHDNLHLSGWVAVPNFHRPQNDLSYSYVNGRMIRDKVINHAIRQAYGDYLTNEQYPAFVLYLDLDPNEVDVNVHPTKHEVRFHQARLIHDFICQGVGNALQSEQADFARYDTPASADEIQEPAANWHSSLIKPNRSAAGHNIFESASDKNISGANTYSHGSAKINRFSTKFAENIPHFSTKSVSKTEQKLYGNLLTTPAEAKKNTAINAESENSFEKNVSTPQQSTQLSGQFLHSLALVKNQALLLQQGQDFYLLPLAKLQKLKFELTLQQPDIAQQPLLIPILFRLNERQLAQWQKQKNFFLQSGFEFDENPAQHRITLNKVPSCLRQQNLQGCVIRLLEENHEKISDFLTALCNQLQLNEIHVLADALTLLTEVELLLKTQNKIQLAQLLISVDFTQYLQ</sequence>
<organism>
    <name type="scientific">Mannheimia succiniciproducens (strain KCTC 0769BP / MBEL55E)</name>
    <dbReference type="NCBI Taxonomy" id="221988"/>
    <lineage>
        <taxon>Bacteria</taxon>
        <taxon>Pseudomonadati</taxon>
        <taxon>Pseudomonadota</taxon>
        <taxon>Gammaproteobacteria</taxon>
        <taxon>Pasteurellales</taxon>
        <taxon>Pasteurellaceae</taxon>
        <taxon>Basfia</taxon>
    </lineage>
</organism>
<comment type="function">
    <text evidence="1">This protein is involved in the repair of mismatches in DNA. It is required for dam-dependent methyl-directed DNA mismatch repair. May act as a 'molecular matchmaker', a protein that promotes the formation of a stable complex between two or more DNA-binding proteins in an ATP-dependent manner without itself being part of a final effector complex.</text>
</comment>
<comment type="similarity">
    <text evidence="1">Belongs to the DNA mismatch repair MutL/HexB family.</text>
</comment>
<evidence type="ECO:0000255" key="1">
    <source>
        <dbReference type="HAMAP-Rule" id="MF_00149"/>
    </source>
</evidence>
<reference key="1">
    <citation type="journal article" date="2004" name="Nat. Biotechnol.">
        <title>The genome sequence of the capnophilic rumen bacterium Mannheimia succiniciproducens.</title>
        <authorList>
            <person name="Hong S.H."/>
            <person name="Kim J.S."/>
            <person name="Lee S.Y."/>
            <person name="In Y.H."/>
            <person name="Choi S.S."/>
            <person name="Rih J.-K."/>
            <person name="Kim C.H."/>
            <person name="Jeong H."/>
            <person name="Hur C.G."/>
            <person name="Kim J.J."/>
        </authorList>
    </citation>
    <scope>NUCLEOTIDE SEQUENCE [LARGE SCALE GENOMIC DNA]</scope>
    <source>
        <strain>KCTC 0769BP / MBEL55E</strain>
    </source>
</reference>
<feature type="chain" id="PRO_1000010041" description="DNA mismatch repair protein MutL">
    <location>
        <begin position="1"/>
        <end position="631"/>
    </location>
</feature>
<proteinExistence type="inferred from homology"/>
<protein>
    <recommendedName>
        <fullName evidence="1">DNA mismatch repair protein MutL</fullName>
    </recommendedName>
</protein>
<name>MUTL_MANSM</name>